<feature type="chain" id="PRO_0000237312" description="DNA-directed RNA polymerase subunit beta">
    <location>
        <begin position="1"/>
        <end position="1287"/>
    </location>
</feature>
<keyword id="KW-0240">DNA-directed RNA polymerase</keyword>
<keyword id="KW-0548">Nucleotidyltransferase</keyword>
<keyword id="KW-1185">Reference proteome</keyword>
<keyword id="KW-0804">Transcription</keyword>
<keyword id="KW-0808">Transferase</keyword>
<dbReference type="EC" id="2.7.7.6" evidence="1"/>
<dbReference type="EMBL" id="CP000159">
    <property type="protein sequence ID" value="ABC45879.1"/>
    <property type="status" value="ALT_INIT"/>
    <property type="molecule type" value="Genomic_DNA"/>
</dbReference>
<dbReference type="RefSeq" id="WP_011404502.1">
    <property type="nucleotide sequence ID" value="NC_007677.1"/>
</dbReference>
<dbReference type="RefSeq" id="YP_445876.1">
    <property type="nucleotide sequence ID" value="NC_007677.1"/>
</dbReference>
<dbReference type="SMR" id="Q2S1Q5"/>
<dbReference type="STRING" id="309807.SRU_1758"/>
<dbReference type="EnsemblBacteria" id="ABC45879">
    <property type="protein sequence ID" value="ABC45879"/>
    <property type="gene ID" value="SRU_1758"/>
</dbReference>
<dbReference type="KEGG" id="sru:SRU_1758"/>
<dbReference type="PATRIC" id="fig|309807.25.peg.1825"/>
<dbReference type="eggNOG" id="COG0085">
    <property type="taxonomic scope" value="Bacteria"/>
</dbReference>
<dbReference type="HOGENOM" id="CLU_000524_4_1_10"/>
<dbReference type="OrthoDB" id="9803954at2"/>
<dbReference type="Proteomes" id="UP000008674">
    <property type="component" value="Chromosome"/>
</dbReference>
<dbReference type="GO" id="GO:0000428">
    <property type="term" value="C:DNA-directed RNA polymerase complex"/>
    <property type="evidence" value="ECO:0007669"/>
    <property type="project" value="UniProtKB-KW"/>
</dbReference>
<dbReference type="GO" id="GO:0003677">
    <property type="term" value="F:DNA binding"/>
    <property type="evidence" value="ECO:0007669"/>
    <property type="project" value="UniProtKB-UniRule"/>
</dbReference>
<dbReference type="GO" id="GO:0003899">
    <property type="term" value="F:DNA-directed RNA polymerase activity"/>
    <property type="evidence" value="ECO:0007669"/>
    <property type="project" value="UniProtKB-UniRule"/>
</dbReference>
<dbReference type="GO" id="GO:0032549">
    <property type="term" value="F:ribonucleoside binding"/>
    <property type="evidence" value="ECO:0007669"/>
    <property type="project" value="InterPro"/>
</dbReference>
<dbReference type="GO" id="GO:0006351">
    <property type="term" value="P:DNA-templated transcription"/>
    <property type="evidence" value="ECO:0007669"/>
    <property type="project" value="UniProtKB-UniRule"/>
</dbReference>
<dbReference type="CDD" id="cd00653">
    <property type="entry name" value="RNA_pol_B_RPB2"/>
    <property type="match status" value="1"/>
</dbReference>
<dbReference type="Gene3D" id="2.40.50.100">
    <property type="match status" value="1"/>
</dbReference>
<dbReference type="Gene3D" id="2.40.50.150">
    <property type="match status" value="1"/>
</dbReference>
<dbReference type="Gene3D" id="3.90.1100.10">
    <property type="match status" value="2"/>
</dbReference>
<dbReference type="Gene3D" id="2.30.150.10">
    <property type="entry name" value="DNA-directed RNA polymerase, beta subunit, external 1 domain"/>
    <property type="match status" value="1"/>
</dbReference>
<dbReference type="Gene3D" id="2.40.270.10">
    <property type="entry name" value="DNA-directed RNA polymerase, subunit 2, domain 6"/>
    <property type="match status" value="2"/>
</dbReference>
<dbReference type="Gene3D" id="3.90.1800.10">
    <property type="entry name" value="RNA polymerase alpha subunit dimerisation domain"/>
    <property type="match status" value="1"/>
</dbReference>
<dbReference type="Gene3D" id="3.90.1110.10">
    <property type="entry name" value="RNA polymerase Rpb2, domain 2"/>
    <property type="match status" value="1"/>
</dbReference>
<dbReference type="HAMAP" id="MF_01321">
    <property type="entry name" value="RNApol_bact_RpoB"/>
    <property type="match status" value="1"/>
</dbReference>
<dbReference type="InterPro" id="IPR042107">
    <property type="entry name" value="DNA-dir_RNA_pol_bsu_ext_1_sf"/>
</dbReference>
<dbReference type="InterPro" id="IPR019462">
    <property type="entry name" value="DNA-dir_RNA_pol_bsu_external_1"/>
</dbReference>
<dbReference type="InterPro" id="IPR015712">
    <property type="entry name" value="DNA-dir_RNA_pol_su2"/>
</dbReference>
<dbReference type="InterPro" id="IPR007120">
    <property type="entry name" value="DNA-dir_RNAP_su2_dom"/>
</dbReference>
<dbReference type="InterPro" id="IPR037033">
    <property type="entry name" value="DNA-dir_RNAP_su2_hyb_sf"/>
</dbReference>
<dbReference type="InterPro" id="IPR010243">
    <property type="entry name" value="RNA_pol_bsu_bac"/>
</dbReference>
<dbReference type="InterPro" id="IPR007121">
    <property type="entry name" value="RNA_pol_bsu_CS"/>
</dbReference>
<dbReference type="InterPro" id="IPR007644">
    <property type="entry name" value="RNA_pol_bsu_protrusion"/>
</dbReference>
<dbReference type="InterPro" id="IPR007642">
    <property type="entry name" value="RNA_pol_Rpb2_2"/>
</dbReference>
<dbReference type="InterPro" id="IPR037034">
    <property type="entry name" value="RNA_pol_Rpb2_2_sf"/>
</dbReference>
<dbReference type="InterPro" id="IPR007645">
    <property type="entry name" value="RNA_pol_Rpb2_3"/>
</dbReference>
<dbReference type="InterPro" id="IPR007641">
    <property type="entry name" value="RNA_pol_Rpb2_7"/>
</dbReference>
<dbReference type="InterPro" id="IPR014724">
    <property type="entry name" value="RNA_pol_RPB2_OB-fold"/>
</dbReference>
<dbReference type="NCBIfam" id="NF001616">
    <property type="entry name" value="PRK00405.1"/>
    <property type="match status" value="1"/>
</dbReference>
<dbReference type="NCBIfam" id="TIGR02013">
    <property type="entry name" value="rpoB"/>
    <property type="match status" value="1"/>
</dbReference>
<dbReference type="PANTHER" id="PTHR20856">
    <property type="entry name" value="DNA-DIRECTED RNA POLYMERASE I SUBUNIT 2"/>
    <property type="match status" value="1"/>
</dbReference>
<dbReference type="Pfam" id="PF04563">
    <property type="entry name" value="RNA_pol_Rpb2_1"/>
    <property type="match status" value="1"/>
</dbReference>
<dbReference type="Pfam" id="PF04561">
    <property type="entry name" value="RNA_pol_Rpb2_2"/>
    <property type="match status" value="2"/>
</dbReference>
<dbReference type="Pfam" id="PF04565">
    <property type="entry name" value="RNA_pol_Rpb2_3"/>
    <property type="match status" value="1"/>
</dbReference>
<dbReference type="Pfam" id="PF10385">
    <property type="entry name" value="RNA_pol_Rpb2_45"/>
    <property type="match status" value="1"/>
</dbReference>
<dbReference type="Pfam" id="PF00562">
    <property type="entry name" value="RNA_pol_Rpb2_6"/>
    <property type="match status" value="1"/>
</dbReference>
<dbReference type="Pfam" id="PF04560">
    <property type="entry name" value="RNA_pol_Rpb2_7"/>
    <property type="match status" value="1"/>
</dbReference>
<dbReference type="SUPFAM" id="SSF64484">
    <property type="entry name" value="beta and beta-prime subunits of DNA dependent RNA-polymerase"/>
    <property type="match status" value="1"/>
</dbReference>
<dbReference type="PROSITE" id="PS01166">
    <property type="entry name" value="RNA_POL_BETA"/>
    <property type="match status" value="1"/>
</dbReference>
<accession>Q2S1Q5</accession>
<evidence type="ECO:0000255" key="1">
    <source>
        <dbReference type="HAMAP-Rule" id="MF_01321"/>
    </source>
</evidence>
<evidence type="ECO:0000305" key="2"/>
<name>RPOB_SALRD</name>
<organism>
    <name type="scientific">Salinibacter ruber (strain DSM 13855 / M31)</name>
    <dbReference type="NCBI Taxonomy" id="309807"/>
    <lineage>
        <taxon>Bacteria</taxon>
        <taxon>Pseudomonadati</taxon>
        <taxon>Rhodothermota</taxon>
        <taxon>Rhodothermia</taxon>
        <taxon>Rhodothermales</taxon>
        <taxon>Salinibacteraceae</taxon>
        <taxon>Salinibacter</taxon>
    </lineage>
</organism>
<protein>
    <recommendedName>
        <fullName evidence="1">DNA-directed RNA polymerase subunit beta</fullName>
        <shortName evidence="1">RNAP subunit beta</shortName>
        <ecNumber evidence="1">2.7.7.6</ecNumber>
    </recommendedName>
    <alternativeName>
        <fullName evidence="1">RNA polymerase subunit beta</fullName>
    </alternativeName>
    <alternativeName>
        <fullName evidence="1">Transcriptase subunit beta</fullName>
    </alternativeName>
</protein>
<proteinExistence type="inferred from homology"/>
<sequence length="1287" mass="144621">MPTFLNGDITTPGHLVDPDPRESFADIPEVWDYPDFLDVQLKTFHDFVQDDVPPADREDVGLQAVFNEHFPIKDNRDRYTLEFVNYELDAPKHTVEECIAQGLTYSIPLKATLRLTSKEEEGGEEAIEAIEQEVYLGTLPFMTDRGTFIVNGAERVIVSQLHRSPGAFFEKEIHSNGTELFSARVIPFRGSWMEFSTDVRDVLWAYVDRKKKVPVTTLLRALGFSSDEEIVKMFDLADAVDIGDEDEFEEHLGRELATSVTIEKTIEIVDEDTGEVVDEEMEREVLLPAEHELEEGDWEELDEYDVSRLYLVREDVEDEALDKSTLVETLQKDSSHTEEEALEVIYEKLRGSEAPDLDSAREALERLFFNEDRYDLGDVGRHRMNARLDVDVDTDEKVLTKEDVVGIVRELIRLQNGESTADDIDHLSNRRVKSVGEQLGSQFSLGLARMARTIKERMNLRDADKFTPKDLVNARTIESVINTFFGTNQLSQFMDQTNALAEMTHKRRMSALGPGGLTRERAGFEVRDVHHTHYGRLCPIETPEGPNIGLMLSLCVHSTINDFGFLETPYRVVEDGRVTDRVEYLSAEEEDQATVAQANAPIGDDGHFERDEVRCRHQGDFPIVEPEEVDYMDVAPNQIVSPSASLVPFLSHNDANRALMGSNMQRQGVPLLRSDSPIVGTGLEGRVAKDSRSCVVAEGEGVVEYVDAERLVVRYDEEQDKTDLTFGEPVQEYELTKFRRTNQGTCMNQKPIVQAGDRVEEGEVLTDGFAMEKGELALGKNVLCAFMPWHGYNYEDAIVISERLVADDVYTSVHIEEFEHEVRDTKRGEEELTREIPNVSEEATKDLDERGIVRVGAEITPGDIIVGKITPKGETDPTPEEKLLRAIFGDKAGDVKDASLKAKPGMEGGVVIDTRLFSRRELDPASKKMEEKRLENIESDHERKLADLNERFWEKFFALVEDATSAGLEDREGEVLLTEGADFEEDAFDEVDPSDLSTRAEFTEDEELNDQISTLLRNYKSRRRDIEGTTKRQKHQVEMGDELPSGVVQMAKVYVARKKKIEVGDKMAGRHGNKGVIAKIAPVEDMPFLDDGTPVDLVLNPLGVPSRMNLGQIYETLLGWAGDRLGVKYATPIFDGASLEDVGDELEKAGLPRDGKVQLYDGRTGEPFDEKTTVGQIYMMKLEHLVEDKMHARSIGPYSLITQQPLGGKAQFGGQRLGEMEVWALYAYGASNTLQEMLTFKSDDVEGRSEAYESIVKGENLPSPGVPESFNVLVRELQGLGLEVTLD</sequence>
<comment type="function">
    <text evidence="1">DNA-dependent RNA polymerase catalyzes the transcription of DNA into RNA using the four ribonucleoside triphosphates as substrates.</text>
</comment>
<comment type="catalytic activity">
    <reaction evidence="1">
        <text>RNA(n) + a ribonucleoside 5'-triphosphate = RNA(n+1) + diphosphate</text>
        <dbReference type="Rhea" id="RHEA:21248"/>
        <dbReference type="Rhea" id="RHEA-COMP:14527"/>
        <dbReference type="Rhea" id="RHEA-COMP:17342"/>
        <dbReference type="ChEBI" id="CHEBI:33019"/>
        <dbReference type="ChEBI" id="CHEBI:61557"/>
        <dbReference type="ChEBI" id="CHEBI:140395"/>
        <dbReference type="EC" id="2.7.7.6"/>
    </reaction>
</comment>
<comment type="subunit">
    <text evidence="1">The RNAP catalytic core consists of 2 alpha, 1 beta, 1 beta' and 1 omega subunit. When a sigma factor is associated with the core the holoenzyme is formed, which can initiate transcription.</text>
</comment>
<comment type="similarity">
    <text evidence="1">Belongs to the RNA polymerase beta chain family.</text>
</comment>
<comment type="sequence caution" evidence="2">
    <conflict type="erroneous initiation">
        <sequence resource="EMBL-CDS" id="ABC45879"/>
    </conflict>
</comment>
<reference key="1">
    <citation type="journal article" date="2005" name="Proc. Natl. Acad. Sci. U.S.A.">
        <title>The genome of Salinibacter ruber: convergence and gene exchange among hyperhalophilic bacteria and archaea.</title>
        <authorList>
            <person name="Mongodin E.F."/>
            <person name="Nelson K.E."/>
            <person name="Daugherty S."/>
            <person name="DeBoy R.T."/>
            <person name="Wister J."/>
            <person name="Khouri H."/>
            <person name="Weidman J."/>
            <person name="Walsh D.A."/>
            <person name="Papke R.T."/>
            <person name="Sanchez Perez G."/>
            <person name="Sharma A.K."/>
            <person name="Nesbo C.L."/>
            <person name="MacLeod D."/>
            <person name="Bapteste E."/>
            <person name="Doolittle W.F."/>
            <person name="Charlebois R.L."/>
            <person name="Legault B."/>
            <person name="Rodriguez-Valera F."/>
        </authorList>
    </citation>
    <scope>NUCLEOTIDE SEQUENCE [LARGE SCALE GENOMIC DNA]</scope>
    <source>
        <strain>DSM 13855 / CECT 5946 / M31</strain>
    </source>
</reference>
<gene>
    <name evidence="1" type="primary">rpoB</name>
    <name type="ordered locus">SRU_1758</name>
</gene>